<sequence length="283" mass="32687">MRQYLDLCQRIVNEGCWIENKRTGKRCLTVINADLTYDVANNRFPIITTRKSYWKAAIAEFLGYIRGYDNAADFRKLGAKTWDANANENQVWLNNPHRKGTDDMGRVYGVQGRAWRKPNGETVDQLRKIVNNLSRGIDDRGEILTFLNPGEFDLGCLRPCMYNHTFSLLGDTLYLTSYQRSCDVPLGLNFNQIQVFTFLALMAQITGKKAGQAYHKIVNAHIYEDQLELMRDVQLKREPFPSPKLEINPDIKTLEDLETWVTMDDFNVVGYQCHEPIKYPFSV</sequence>
<accession>Q65VJ8</accession>
<reference key="1">
    <citation type="journal article" date="2004" name="Nat. Biotechnol.">
        <title>The genome sequence of the capnophilic rumen bacterium Mannheimia succiniciproducens.</title>
        <authorList>
            <person name="Hong S.H."/>
            <person name="Kim J.S."/>
            <person name="Lee S.Y."/>
            <person name="In Y.H."/>
            <person name="Choi S.S."/>
            <person name="Rih J.-K."/>
            <person name="Kim C.H."/>
            <person name="Jeong H."/>
            <person name="Hur C.G."/>
            <person name="Kim J.J."/>
        </authorList>
    </citation>
    <scope>NUCLEOTIDE SEQUENCE [LARGE SCALE GENOMIC DNA]</scope>
    <source>
        <strain>KCTC 0769BP / MBEL55E</strain>
    </source>
</reference>
<feature type="chain" id="PRO_0000140978" description="Thymidylate synthase">
    <location>
        <begin position="1"/>
        <end position="283"/>
    </location>
</feature>
<feature type="active site" description="Nucleophile" evidence="1">
    <location>
        <position position="160"/>
    </location>
</feature>
<feature type="binding site" evidence="1">
    <location>
        <position position="22"/>
    </location>
    <ligand>
        <name>dUMP</name>
        <dbReference type="ChEBI" id="CHEBI:246422"/>
    </ligand>
</feature>
<feature type="binding site" evidence="1">
    <location>
        <begin position="180"/>
        <end position="183"/>
    </location>
    <ligand>
        <name>dUMP</name>
        <dbReference type="ChEBI" id="CHEBI:246422"/>
    </ligand>
</feature>
<feature type="binding site" evidence="1">
    <location>
        <position position="183"/>
    </location>
    <ligand>
        <name>(6R)-5,10-methylene-5,6,7,8-tetrahydrofolate</name>
        <dbReference type="ChEBI" id="CHEBI:15636"/>
    </ligand>
</feature>
<feature type="binding site" evidence="1">
    <location>
        <position position="191"/>
    </location>
    <ligand>
        <name>dUMP</name>
        <dbReference type="ChEBI" id="CHEBI:246422"/>
    </ligand>
</feature>
<feature type="binding site" evidence="1">
    <location>
        <begin position="221"/>
        <end position="223"/>
    </location>
    <ligand>
        <name>dUMP</name>
        <dbReference type="ChEBI" id="CHEBI:246422"/>
    </ligand>
</feature>
<feature type="binding site" evidence="1">
    <location>
        <position position="282"/>
    </location>
    <ligand>
        <name>(6R)-5,10-methylene-5,6,7,8-tetrahydrofolate</name>
        <dbReference type="ChEBI" id="CHEBI:15636"/>
    </ligand>
</feature>
<protein>
    <recommendedName>
        <fullName evidence="1">Thymidylate synthase</fullName>
        <shortName evidence="1">TS</shortName>
        <shortName evidence="1">TSase</shortName>
        <ecNumber evidence="1">2.1.1.45</ecNumber>
    </recommendedName>
</protein>
<keyword id="KW-0963">Cytoplasm</keyword>
<keyword id="KW-0489">Methyltransferase</keyword>
<keyword id="KW-0545">Nucleotide biosynthesis</keyword>
<keyword id="KW-0808">Transferase</keyword>
<comment type="function">
    <text evidence="1">Catalyzes the reductive methylation of 2'-deoxyuridine-5'-monophosphate (dUMP) to 2'-deoxythymidine-5'-monophosphate (dTMP) while utilizing 5,10-methylenetetrahydrofolate (mTHF) as the methyl donor and reductant in the reaction, yielding dihydrofolate (DHF) as a by-product. This enzymatic reaction provides an intracellular de novo source of dTMP, an essential precursor for DNA biosynthesis.</text>
</comment>
<comment type="catalytic activity">
    <reaction evidence="1">
        <text>dUMP + (6R)-5,10-methylene-5,6,7,8-tetrahydrofolate = 7,8-dihydrofolate + dTMP</text>
        <dbReference type="Rhea" id="RHEA:12104"/>
        <dbReference type="ChEBI" id="CHEBI:15636"/>
        <dbReference type="ChEBI" id="CHEBI:57451"/>
        <dbReference type="ChEBI" id="CHEBI:63528"/>
        <dbReference type="ChEBI" id="CHEBI:246422"/>
        <dbReference type="EC" id="2.1.1.45"/>
    </reaction>
</comment>
<comment type="pathway">
    <text evidence="1">Pyrimidine metabolism; dTTP biosynthesis.</text>
</comment>
<comment type="subunit">
    <text evidence="1">Homodimer.</text>
</comment>
<comment type="subcellular location">
    <subcellularLocation>
        <location evidence="1">Cytoplasm</location>
    </subcellularLocation>
</comment>
<comment type="similarity">
    <text evidence="1">Belongs to the thymidylate synthase family. Bacterial-type ThyA subfamily.</text>
</comment>
<organism>
    <name type="scientific">Mannheimia succiniciproducens (strain KCTC 0769BP / MBEL55E)</name>
    <dbReference type="NCBI Taxonomy" id="221988"/>
    <lineage>
        <taxon>Bacteria</taxon>
        <taxon>Pseudomonadati</taxon>
        <taxon>Pseudomonadota</taxon>
        <taxon>Gammaproteobacteria</taxon>
        <taxon>Pasteurellales</taxon>
        <taxon>Pasteurellaceae</taxon>
        <taxon>Basfia</taxon>
    </lineage>
</organism>
<dbReference type="EC" id="2.1.1.45" evidence="1"/>
<dbReference type="EMBL" id="AE016827">
    <property type="protein sequence ID" value="AAU37012.1"/>
    <property type="molecule type" value="Genomic_DNA"/>
</dbReference>
<dbReference type="RefSeq" id="WP_011199587.1">
    <property type="nucleotide sequence ID" value="NC_006300.1"/>
</dbReference>
<dbReference type="SMR" id="Q65VJ8"/>
<dbReference type="STRING" id="221988.MS0405"/>
<dbReference type="KEGG" id="msu:MS0405"/>
<dbReference type="eggNOG" id="COG0207">
    <property type="taxonomic scope" value="Bacteria"/>
</dbReference>
<dbReference type="HOGENOM" id="CLU_021669_0_1_6"/>
<dbReference type="OrthoDB" id="9774633at2"/>
<dbReference type="UniPathway" id="UPA00575"/>
<dbReference type="Proteomes" id="UP000000607">
    <property type="component" value="Chromosome"/>
</dbReference>
<dbReference type="GO" id="GO:0005829">
    <property type="term" value="C:cytosol"/>
    <property type="evidence" value="ECO:0007669"/>
    <property type="project" value="TreeGrafter"/>
</dbReference>
<dbReference type="GO" id="GO:0004799">
    <property type="term" value="F:thymidylate synthase activity"/>
    <property type="evidence" value="ECO:0007669"/>
    <property type="project" value="UniProtKB-UniRule"/>
</dbReference>
<dbReference type="GO" id="GO:0006231">
    <property type="term" value="P:dTMP biosynthetic process"/>
    <property type="evidence" value="ECO:0007669"/>
    <property type="project" value="UniProtKB-UniRule"/>
</dbReference>
<dbReference type="GO" id="GO:0006235">
    <property type="term" value="P:dTTP biosynthetic process"/>
    <property type="evidence" value="ECO:0007669"/>
    <property type="project" value="UniProtKB-UniRule"/>
</dbReference>
<dbReference type="GO" id="GO:0032259">
    <property type="term" value="P:methylation"/>
    <property type="evidence" value="ECO:0007669"/>
    <property type="project" value="UniProtKB-KW"/>
</dbReference>
<dbReference type="CDD" id="cd00351">
    <property type="entry name" value="TS_Pyrimidine_HMase"/>
    <property type="match status" value="1"/>
</dbReference>
<dbReference type="FunFam" id="3.30.572.10:FF:000003">
    <property type="entry name" value="Thymidylate synthase"/>
    <property type="match status" value="1"/>
</dbReference>
<dbReference type="Gene3D" id="3.30.572.10">
    <property type="entry name" value="Thymidylate synthase/dCMP hydroxymethylase domain"/>
    <property type="match status" value="1"/>
</dbReference>
<dbReference type="HAMAP" id="MF_00008">
    <property type="entry name" value="Thymidy_synth_bact"/>
    <property type="match status" value="1"/>
</dbReference>
<dbReference type="InterPro" id="IPR045097">
    <property type="entry name" value="Thymidate_synth/dCMP_Mease"/>
</dbReference>
<dbReference type="InterPro" id="IPR023451">
    <property type="entry name" value="Thymidate_synth/dCMP_Mease_dom"/>
</dbReference>
<dbReference type="InterPro" id="IPR036926">
    <property type="entry name" value="Thymidate_synth/dCMP_Mease_sf"/>
</dbReference>
<dbReference type="InterPro" id="IPR000398">
    <property type="entry name" value="Thymidylate_synthase"/>
</dbReference>
<dbReference type="NCBIfam" id="NF002498">
    <property type="entry name" value="PRK01827.1-4"/>
    <property type="match status" value="1"/>
</dbReference>
<dbReference type="NCBIfam" id="TIGR03284">
    <property type="entry name" value="thym_sym"/>
    <property type="match status" value="1"/>
</dbReference>
<dbReference type="PANTHER" id="PTHR11548:SF9">
    <property type="entry name" value="THYMIDYLATE SYNTHASE"/>
    <property type="match status" value="1"/>
</dbReference>
<dbReference type="PANTHER" id="PTHR11548">
    <property type="entry name" value="THYMIDYLATE SYNTHASE 1"/>
    <property type="match status" value="1"/>
</dbReference>
<dbReference type="Pfam" id="PF00303">
    <property type="entry name" value="Thymidylat_synt"/>
    <property type="match status" value="1"/>
</dbReference>
<dbReference type="PRINTS" id="PR00108">
    <property type="entry name" value="THYMDSNTHASE"/>
</dbReference>
<dbReference type="SUPFAM" id="SSF55831">
    <property type="entry name" value="Thymidylate synthase/dCMP hydroxymethylase"/>
    <property type="match status" value="1"/>
</dbReference>
<proteinExistence type="inferred from homology"/>
<gene>
    <name evidence="1" type="primary">thyA</name>
    <name type="ordered locus">MS0405</name>
</gene>
<name>TYSY_MANSM</name>
<evidence type="ECO:0000255" key="1">
    <source>
        <dbReference type="HAMAP-Rule" id="MF_00008"/>
    </source>
</evidence>